<feature type="chain" id="PRO_0000176191" description="Uracil-DNA glycosylase">
    <location>
        <begin position="1"/>
        <end position="204"/>
    </location>
</feature>
<feature type="active site" description="Proton acceptor" evidence="1">
    <location>
        <position position="47"/>
    </location>
</feature>
<name>UNG_BHV1C</name>
<protein>
    <recommendedName>
        <fullName evidence="1">Uracil-DNA glycosylase</fullName>
        <shortName evidence="1">UDG</shortName>
        <ecNumber evidence="1">3.2.2.27</ecNumber>
    </recommendedName>
    <alternativeName>
        <fullName evidence="1">UNG</fullName>
    </alternativeName>
</protein>
<comment type="function">
    <text evidence="1">Excises uracil residues from the DNA which can arise as a result of misincorporation of dUMP residues by DNA polymerase or deamination of cytosines. Therefore may reduce deleterious uracil incorporation into the viral genome, particularly in terminally differentiated cells which lack DNA repair enzymes.</text>
</comment>
<comment type="catalytic activity">
    <reaction evidence="1">
        <text>Hydrolyzes single-stranded DNA or mismatched double-stranded DNA and polynucleotides, releasing free uracil.</text>
        <dbReference type="EC" id="3.2.2.27"/>
    </reaction>
</comment>
<comment type="subcellular location">
    <subcellularLocation>
        <location evidence="1">Host nucleus</location>
    </subcellularLocation>
</comment>
<comment type="similarity">
    <text evidence="1">Belongs to the uracil-DNA glycosylase (UDG) superfamily. UNG family.</text>
</comment>
<keyword id="KW-0227">DNA damage</keyword>
<keyword id="KW-0234">DNA repair</keyword>
<keyword id="KW-1048">Host nucleus</keyword>
<keyword id="KW-0378">Hydrolase</keyword>
<organismHost>
    <name type="scientific">Bos taurus</name>
    <name type="common">Bovine</name>
    <dbReference type="NCBI Taxonomy" id="9913"/>
</organismHost>
<gene>
    <name type="primary">UL2</name>
</gene>
<sequence>MPYTRHALREYERRSRVEQVLPPKADIFAWTRYAAPEDIKVVILGQDPYHSRGQAHGLAFSVNRGVPVPPSLQNIYAAVQKNFPGAPRPSHGCLEDWARRGVLLLNTSLTVRSGAPGSHSSLGWGRLVHAVLARLSAESGPLVFMLWGAHAQRAFGAAGKRHLVLTYSHPSPLSRAPFVHCTHFAEANAFLEQHGRGGVDWSIV</sequence>
<organism>
    <name type="scientific">Bovine herpesvirus 1.1 (strain Cooper)</name>
    <name type="common">BoHV-1</name>
    <name type="synonym">Infectious bovine rhinotracheitis virus</name>
    <dbReference type="NCBI Taxonomy" id="10323"/>
    <lineage>
        <taxon>Viruses</taxon>
        <taxon>Duplodnaviria</taxon>
        <taxon>Heunggongvirae</taxon>
        <taxon>Peploviricota</taxon>
        <taxon>Herviviricetes</taxon>
        <taxon>Herpesvirales</taxon>
        <taxon>Orthoherpesviridae</taxon>
        <taxon>Alphaherpesvirinae</taxon>
        <taxon>Varicellovirus</taxon>
        <taxon>Varicellovirus bovinealpha1</taxon>
    </lineage>
</organism>
<proteinExistence type="inferred from homology"/>
<reference key="1">
    <citation type="journal article" date="1995" name="Virology">
        <title>Identification and transcriptional analysis of a 3'-coterminal gene cluster containing UL1, UL2, UL3, and UL3.5 open reading frames of bovine herpesvirus-1.</title>
        <authorList>
            <person name="Khattar S.K."/>
            <person name="van Drunen Littel-van den Hurk S."/>
            <person name="Babiuk L.A."/>
            <person name="Tikoo S.K."/>
        </authorList>
    </citation>
    <scope>NUCLEOTIDE SEQUENCE [GENOMIC DNA]</scope>
</reference>
<dbReference type="EC" id="3.2.2.27" evidence="1"/>
<dbReference type="EMBL" id="U32173">
    <property type="protein sequence ID" value="AAC54556.1"/>
    <property type="molecule type" value="Genomic_DNA"/>
</dbReference>
<dbReference type="SMR" id="P53764"/>
<dbReference type="GO" id="GO:0042025">
    <property type="term" value="C:host cell nucleus"/>
    <property type="evidence" value="ECO:0007669"/>
    <property type="project" value="UniProtKB-SubCell"/>
</dbReference>
<dbReference type="GO" id="GO:0004844">
    <property type="term" value="F:uracil DNA N-glycosylase activity"/>
    <property type="evidence" value="ECO:0007669"/>
    <property type="project" value="UniProtKB-EC"/>
</dbReference>
<dbReference type="GO" id="GO:0097510">
    <property type="term" value="P:base-excision repair, AP site formation via deaminated base removal"/>
    <property type="evidence" value="ECO:0007669"/>
    <property type="project" value="TreeGrafter"/>
</dbReference>
<dbReference type="CDD" id="cd10027">
    <property type="entry name" value="UDG-F1-like"/>
    <property type="match status" value="1"/>
</dbReference>
<dbReference type="Gene3D" id="3.40.470.10">
    <property type="entry name" value="Uracil-DNA glycosylase-like domain"/>
    <property type="match status" value="1"/>
</dbReference>
<dbReference type="HAMAP" id="MF_00148">
    <property type="entry name" value="UDG"/>
    <property type="match status" value="1"/>
</dbReference>
<dbReference type="InterPro" id="IPR002043">
    <property type="entry name" value="UDG_fam1"/>
</dbReference>
<dbReference type="InterPro" id="IPR018085">
    <property type="entry name" value="Ura-DNA_Glyclase_AS"/>
</dbReference>
<dbReference type="InterPro" id="IPR005122">
    <property type="entry name" value="Uracil-DNA_glycosylase-like"/>
</dbReference>
<dbReference type="InterPro" id="IPR036895">
    <property type="entry name" value="Uracil-DNA_glycosylase-like_sf"/>
</dbReference>
<dbReference type="NCBIfam" id="NF003588">
    <property type="entry name" value="PRK05254.1-1"/>
    <property type="match status" value="1"/>
</dbReference>
<dbReference type="NCBIfam" id="NF003589">
    <property type="entry name" value="PRK05254.1-2"/>
    <property type="match status" value="1"/>
</dbReference>
<dbReference type="NCBIfam" id="NF003592">
    <property type="entry name" value="PRK05254.1-5"/>
    <property type="match status" value="1"/>
</dbReference>
<dbReference type="NCBIfam" id="TIGR00628">
    <property type="entry name" value="ung"/>
    <property type="match status" value="1"/>
</dbReference>
<dbReference type="PANTHER" id="PTHR11264">
    <property type="entry name" value="URACIL-DNA GLYCOSYLASE"/>
    <property type="match status" value="1"/>
</dbReference>
<dbReference type="PANTHER" id="PTHR11264:SF0">
    <property type="entry name" value="URACIL-DNA GLYCOSYLASE"/>
    <property type="match status" value="1"/>
</dbReference>
<dbReference type="Pfam" id="PF03167">
    <property type="entry name" value="UDG"/>
    <property type="match status" value="1"/>
</dbReference>
<dbReference type="SMART" id="SM00986">
    <property type="entry name" value="UDG"/>
    <property type="match status" value="1"/>
</dbReference>
<dbReference type="SMART" id="SM00987">
    <property type="entry name" value="UreE_C"/>
    <property type="match status" value="1"/>
</dbReference>
<dbReference type="SUPFAM" id="SSF52141">
    <property type="entry name" value="Uracil-DNA glycosylase-like"/>
    <property type="match status" value="1"/>
</dbReference>
<dbReference type="PROSITE" id="PS00130">
    <property type="entry name" value="U_DNA_GLYCOSYLASE"/>
    <property type="match status" value="1"/>
</dbReference>
<evidence type="ECO:0000255" key="1">
    <source>
        <dbReference type="HAMAP-Rule" id="MF_04046"/>
    </source>
</evidence>
<accession>P53764</accession>